<name>CLPP_MARMS</name>
<sequence length="210" mass="23160">MNLMNPTTGPVAITSNGLVPMVIEQTARGERSFDIYSRLLKERVIFLVGQVEDHMANLVVAQLLFLESENPDKDIHLYINSPGGSVTAGMSIYDTMQFIKPDVSTMCIGQAASMGALLLTAGAAGKRYCLPNSRVMIHQPLGGYQGQASDIEIHTREILSIKHKLNEIISFHTGKPIEQVALDTDRDNFMNPQTAKDYGLIDEILQKRTV</sequence>
<proteinExistence type="inferred from homology"/>
<keyword id="KW-0963">Cytoplasm</keyword>
<keyword id="KW-0378">Hydrolase</keyword>
<keyword id="KW-0645">Protease</keyword>
<keyword id="KW-0720">Serine protease</keyword>
<dbReference type="EC" id="3.4.21.92" evidence="1"/>
<dbReference type="EMBL" id="CP000749">
    <property type="protein sequence ID" value="ABR70649.1"/>
    <property type="molecule type" value="Genomic_DNA"/>
</dbReference>
<dbReference type="SMR" id="A6VW20"/>
<dbReference type="STRING" id="400668.Mmwyl1_1723"/>
<dbReference type="MEROPS" id="S14.001"/>
<dbReference type="KEGG" id="mmw:Mmwyl1_1723"/>
<dbReference type="eggNOG" id="COG0740">
    <property type="taxonomic scope" value="Bacteria"/>
</dbReference>
<dbReference type="HOGENOM" id="CLU_058707_3_2_6"/>
<dbReference type="OrthoDB" id="9802800at2"/>
<dbReference type="GO" id="GO:0005737">
    <property type="term" value="C:cytoplasm"/>
    <property type="evidence" value="ECO:0007669"/>
    <property type="project" value="UniProtKB-SubCell"/>
</dbReference>
<dbReference type="GO" id="GO:0009368">
    <property type="term" value="C:endopeptidase Clp complex"/>
    <property type="evidence" value="ECO:0007669"/>
    <property type="project" value="TreeGrafter"/>
</dbReference>
<dbReference type="GO" id="GO:0004176">
    <property type="term" value="F:ATP-dependent peptidase activity"/>
    <property type="evidence" value="ECO:0007669"/>
    <property type="project" value="InterPro"/>
</dbReference>
<dbReference type="GO" id="GO:0051117">
    <property type="term" value="F:ATPase binding"/>
    <property type="evidence" value="ECO:0007669"/>
    <property type="project" value="TreeGrafter"/>
</dbReference>
<dbReference type="GO" id="GO:0004252">
    <property type="term" value="F:serine-type endopeptidase activity"/>
    <property type="evidence" value="ECO:0007669"/>
    <property type="project" value="UniProtKB-UniRule"/>
</dbReference>
<dbReference type="GO" id="GO:0006515">
    <property type="term" value="P:protein quality control for misfolded or incompletely synthesized proteins"/>
    <property type="evidence" value="ECO:0007669"/>
    <property type="project" value="TreeGrafter"/>
</dbReference>
<dbReference type="CDD" id="cd07017">
    <property type="entry name" value="S14_ClpP_2"/>
    <property type="match status" value="1"/>
</dbReference>
<dbReference type="FunFam" id="3.90.226.10:FF:000001">
    <property type="entry name" value="ATP-dependent Clp protease proteolytic subunit"/>
    <property type="match status" value="1"/>
</dbReference>
<dbReference type="Gene3D" id="3.90.226.10">
    <property type="entry name" value="2-enoyl-CoA Hydratase, Chain A, domain 1"/>
    <property type="match status" value="1"/>
</dbReference>
<dbReference type="HAMAP" id="MF_00444">
    <property type="entry name" value="ClpP"/>
    <property type="match status" value="1"/>
</dbReference>
<dbReference type="InterPro" id="IPR001907">
    <property type="entry name" value="ClpP"/>
</dbReference>
<dbReference type="InterPro" id="IPR029045">
    <property type="entry name" value="ClpP/crotonase-like_dom_sf"/>
</dbReference>
<dbReference type="InterPro" id="IPR023562">
    <property type="entry name" value="ClpP/TepA"/>
</dbReference>
<dbReference type="InterPro" id="IPR033135">
    <property type="entry name" value="ClpP_His_AS"/>
</dbReference>
<dbReference type="InterPro" id="IPR018215">
    <property type="entry name" value="ClpP_Ser_AS"/>
</dbReference>
<dbReference type="NCBIfam" id="TIGR00493">
    <property type="entry name" value="clpP"/>
    <property type="match status" value="1"/>
</dbReference>
<dbReference type="NCBIfam" id="NF001368">
    <property type="entry name" value="PRK00277.1"/>
    <property type="match status" value="1"/>
</dbReference>
<dbReference type="NCBIfam" id="NF009205">
    <property type="entry name" value="PRK12553.1"/>
    <property type="match status" value="1"/>
</dbReference>
<dbReference type="PANTHER" id="PTHR10381">
    <property type="entry name" value="ATP-DEPENDENT CLP PROTEASE PROTEOLYTIC SUBUNIT"/>
    <property type="match status" value="1"/>
</dbReference>
<dbReference type="PANTHER" id="PTHR10381:SF70">
    <property type="entry name" value="ATP-DEPENDENT CLP PROTEASE PROTEOLYTIC SUBUNIT"/>
    <property type="match status" value="1"/>
</dbReference>
<dbReference type="Pfam" id="PF00574">
    <property type="entry name" value="CLP_protease"/>
    <property type="match status" value="1"/>
</dbReference>
<dbReference type="PRINTS" id="PR00127">
    <property type="entry name" value="CLPPROTEASEP"/>
</dbReference>
<dbReference type="SUPFAM" id="SSF52096">
    <property type="entry name" value="ClpP/crotonase"/>
    <property type="match status" value="1"/>
</dbReference>
<dbReference type="PROSITE" id="PS00382">
    <property type="entry name" value="CLP_PROTEASE_HIS"/>
    <property type="match status" value="1"/>
</dbReference>
<dbReference type="PROSITE" id="PS00381">
    <property type="entry name" value="CLP_PROTEASE_SER"/>
    <property type="match status" value="1"/>
</dbReference>
<gene>
    <name evidence="1" type="primary">clpP</name>
    <name type="ordered locus">Mmwyl1_1723</name>
</gene>
<accession>A6VW20</accession>
<protein>
    <recommendedName>
        <fullName evidence="1">ATP-dependent Clp protease proteolytic subunit</fullName>
        <ecNumber evidence="1">3.4.21.92</ecNumber>
    </recommendedName>
    <alternativeName>
        <fullName evidence="1">Endopeptidase Clp</fullName>
    </alternativeName>
</protein>
<reference key="1">
    <citation type="submission" date="2007-06" db="EMBL/GenBank/DDBJ databases">
        <title>Complete sequence of Marinomonas sp. MWYL1.</title>
        <authorList>
            <consortium name="US DOE Joint Genome Institute"/>
            <person name="Copeland A."/>
            <person name="Lucas S."/>
            <person name="Lapidus A."/>
            <person name="Barry K."/>
            <person name="Glavina del Rio T."/>
            <person name="Dalin E."/>
            <person name="Tice H."/>
            <person name="Pitluck S."/>
            <person name="Kiss H."/>
            <person name="Brettin T."/>
            <person name="Bruce D."/>
            <person name="Detter J.C."/>
            <person name="Han C."/>
            <person name="Schmutz J."/>
            <person name="Larimer F."/>
            <person name="Land M."/>
            <person name="Hauser L."/>
            <person name="Kyrpides N."/>
            <person name="Kim E."/>
            <person name="Johnston A.W.B."/>
            <person name="Todd J.D."/>
            <person name="Rogers R."/>
            <person name="Wexler M."/>
            <person name="Bond P.L."/>
            <person name="Li Y."/>
            <person name="Richardson P."/>
        </authorList>
    </citation>
    <scope>NUCLEOTIDE SEQUENCE [LARGE SCALE GENOMIC DNA]</scope>
    <source>
        <strain>MWYL1</strain>
    </source>
</reference>
<organism>
    <name type="scientific">Marinomonas sp. (strain MWYL1)</name>
    <dbReference type="NCBI Taxonomy" id="400668"/>
    <lineage>
        <taxon>Bacteria</taxon>
        <taxon>Pseudomonadati</taxon>
        <taxon>Pseudomonadota</taxon>
        <taxon>Gammaproteobacteria</taxon>
        <taxon>Oceanospirillales</taxon>
        <taxon>Oceanospirillaceae</taxon>
        <taxon>Marinomonas</taxon>
    </lineage>
</organism>
<comment type="function">
    <text evidence="1">Cleaves peptides in various proteins in a process that requires ATP hydrolysis. Has a chymotrypsin-like activity. Plays a major role in the degradation of misfolded proteins.</text>
</comment>
<comment type="catalytic activity">
    <reaction evidence="1">
        <text>Hydrolysis of proteins to small peptides in the presence of ATP and magnesium. alpha-casein is the usual test substrate. In the absence of ATP, only oligopeptides shorter than five residues are hydrolyzed (such as succinyl-Leu-Tyr-|-NHMec, and Leu-Tyr-Leu-|-Tyr-Trp, in which cleavage of the -Tyr-|-Leu- and -Tyr-|-Trp bonds also occurs).</text>
        <dbReference type="EC" id="3.4.21.92"/>
    </reaction>
</comment>
<comment type="subunit">
    <text evidence="1">Fourteen ClpP subunits assemble into 2 heptameric rings which stack back to back to give a disk-like structure with a central cavity, resembling the structure of eukaryotic proteasomes.</text>
</comment>
<comment type="subcellular location">
    <subcellularLocation>
        <location evidence="1">Cytoplasm</location>
    </subcellularLocation>
</comment>
<comment type="similarity">
    <text evidence="1">Belongs to the peptidase S14 family.</text>
</comment>
<evidence type="ECO:0000255" key="1">
    <source>
        <dbReference type="HAMAP-Rule" id="MF_00444"/>
    </source>
</evidence>
<feature type="chain" id="PRO_1000135159" description="ATP-dependent Clp protease proteolytic subunit">
    <location>
        <begin position="1"/>
        <end position="210"/>
    </location>
</feature>
<feature type="active site" description="Nucleophile" evidence="1">
    <location>
        <position position="113"/>
    </location>
</feature>
<feature type="active site" evidence="1">
    <location>
        <position position="138"/>
    </location>
</feature>